<sequence length="458" mass="50567">MSITKEFDTITAISTPLGEGAIGIVRLSGTDALAIAQSVFKGKNLEQVASHTINYGHIIDPKTGTIIDEVMVSVMLAPKTFTRENVVEINTHGGIAVTNEILQLLIRQGARMAEPGEFTKRAFLNGRVDLTQAEAVMDIIRAKTDKAMTIAVKQLDGSLSQLINDTRQEILNTLAQVEVNIDYPEYDDVEEMTTALLREKTQEFQSLLENLLRTAKRGKILREGLSTAIIGRPNVGKSSLLNNLLREDKAIVTDIAGTTRDVIEEYVNIKGVPLKLVDTAGIRETDDLVEQIGVERSKKALQEADLVLLVLNASEKLTDQDRALLNLSQDSNRIILLNKTDLEQKIELEQLPDDYIPISVLTNQNINLIEDRINQLFFDNAGLVEQDATYLSNARHISLIEKTVQSLEAVNDGLALGMPVDLLQVDLTRTWEILGEITGDAAPDELITQLFSQFCLGK</sequence>
<keyword id="KW-0963">Cytoplasm</keyword>
<keyword id="KW-0342">GTP-binding</keyword>
<keyword id="KW-0378">Hydrolase</keyword>
<keyword id="KW-0460">Magnesium</keyword>
<keyword id="KW-0479">Metal-binding</keyword>
<keyword id="KW-0547">Nucleotide-binding</keyword>
<keyword id="KW-0630">Potassium</keyword>
<keyword id="KW-0819">tRNA processing</keyword>
<reference key="1">
    <citation type="journal article" date="2003" name="Genome Res.">
        <title>Genome sequence of an M3 strain of Streptococcus pyogenes reveals a large-scale genomic rearrangement in invasive strains and new insights into phage evolution.</title>
        <authorList>
            <person name="Nakagawa I."/>
            <person name="Kurokawa K."/>
            <person name="Yamashita A."/>
            <person name="Nakata M."/>
            <person name="Tomiyasu Y."/>
            <person name="Okahashi N."/>
            <person name="Kawabata S."/>
            <person name="Yamazaki K."/>
            <person name="Shiba T."/>
            <person name="Yasunaga T."/>
            <person name="Hayashi H."/>
            <person name="Hattori M."/>
            <person name="Hamada S."/>
        </authorList>
    </citation>
    <scope>NUCLEOTIDE SEQUENCE [LARGE SCALE GENOMIC DNA]</scope>
    <source>
        <strain>SSI-1</strain>
    </source>
</reference>
<proteinExistence type="inferred from homology"/>
<evidence type="ECO:0000255" key="1">
    <source>
        <dbReference type="HAMAP-Rule" id="MF_00379"/>
    </source>
</evidence>
<accession>P0DG23</accession>
<accession>Q8K7L5</accession>
<organism>
    <name type="scientific">Streptococcus pyogenes serotype M3 (strain SSI-1)</name>
    <dbReference type="NCBI Taxonomy" id="193567"/>
    <lineage>
        <taxon>Bacteria</taxon>
        <taxon>Bacillati</taxon>
        <taxon>Bacillota</taxon>
        <taxon>Bacilli</taxon>
        <taxon>Lactobacillales</taxon>
        <taxon>Streptococcaceae</taxon>
        <taxon>Streptococcus</taxon>
    </lineage>
</organism>
<feature type="chain" id="PRO_0000411601" description="tRNA modification GTPase MnmE">
    <location>
        <begin position="1"/>
        <end position="458"/>
    </location>
</feature>
<feature type="domain" description="TrmE-type G">
    <location>
        <begin position="224"/>
        <end position="378"/>
    </location>
</feature>
<feature type="binding site" evidence="1">
    <location>
        <position position="26"/>
    </location>
    <ligand>
        <name>(6S)-5-formyl-5,6,7,8-tetrahydrofolate</name>
        <dbReference type="ChEBI" id="CHEBI:57457"/>
    </ligand>
</feature>
<feature type="binding site" evidence="1">
    <location>
        <position position="88"/>
    </location>
    <ligand>
        <name>(6S)-5-formyl-5,6,7,8-tetrahydrofolate</name>
        <dbReference type="ChEBI" id="CHEBI:57457"/>
    </ligand>
</feature>
<feature type="binding site" evidence="1">
    <location>
        <position position="127"/>
    </location>
    <ligand>
        <name>(6S)-5-formyl-5,6,7,8-tetrahydrofolate</name>
        <dbReference type="ChEBI" id="CHEBI:57457"/>
    </ligand>
</feature>
<feature type="binding site" evidence="1">
    <location>
        <begin position="234"/>
        <end position="239"/>
    </location>
    <ligand>
        <name>GTP</name>
        <dbReference type="ChEBI" id="CHEBI:37565"/>
    </ligand>
</feature>
<feature type="binding site" evidence="1">
    <location>
        <position position="234"/>
    </location>
    <ligand>
        <name>K(+)</name>
        <dbReference type="ChEBI" id="CHEBI:29103"/>
    </ligand>
</feature>
<feature type="binding site" evidence="1">
    <location>
        <position position="238"/>
    </location>
    <ligand>
        <name>Mg(2+)</name>
        <dbReference type="ChEBI" id="CHEBI:18420"/>
    </ligand>
</feature>
<feature type="binding site" evidence="1">
    <location>
        <begin position="253"/>
        <end position="259"/>
    </location>
    <ligand>
        <name>GTP</name>
        <dbReference type="ChEBI" id="CHEBI:37565"/>
    </ligand>
</feature>
<feature type="binding site" evidence="1">
    <location>
        <position position="253"/>
    </location>
    <ligand>
        <name>K(+)</name>
        <dbReference type="ChEBI" id="CHEBI:29103"/>
    </ligand>
</feature>
<feature type="binding site" evidence="1">
    <location>
        <position position="255"/>
    </location>
    <ligand>
        <name>K(+)</name>
        <dbReference type="ChEBI" id="CHEBI:29103"/>
    </ligand>
</feature>
<feature type="binding site" evidence="1">
    <location>
        <position position="258"/>
    </location>
    <ligand>
        <name>K(+)</name>
        <dbReference type="ChEBI" id="CHEBI:29103"/>
    </ligand>
</feature>
<feature type="binding site" evidence="1">
    <location>
        <position position="259"/>
    </location>
    <ligand>
        <name>Mg(2+)</name>
        <dbReference type="ChEBI" id="CHEBI:18420"/>
    </ligand>
</feature>
<feature type="binding site" evidence="1">
    <location>
        <begin position="278"/>
        <end position="281"/>
    </location>
    <ligand>
        <name>GTP</name>
        <dbReference type="ChEBI" id="CHEBI:37565"/>
    </ligand>
</feature>
<feature type="binding site" evidence="1">
    <location>
        <position position="458"/>
    </location>
    <ligand>
        <name>(6S)-5-formyl-5,6,7,8-tetrahydrofolate</name>
        <dbReference type="ChEBI" id="CHEBI:57457"/>
    </ligand>
</feature>
<protein>
    <recommendedName>
        <fullName evidence="1">tRNA modification GTPase MnmE</fullName>
        <ecNumber evidence="1">3.6.-.-</ecNumber>
    </recommendedName>
</protein>
<name>MNME_STRPQ</name>
<comment type="function">
    <text evidence="1">Exhibits a very high intrinsic GTPase hydrolysis rate. Involved in the addition of a carboxymethylaminomethyl (cmnm) group at the wobble position (U34) of certain tRNAs, forming tRNA-cmnm(5)s(2)U34.</text>
</comment>
<comment type="cofactor">
    <cofactor evidence="1">
        <name>K(+)</name>
        <dbReference type="ChEBI" id="CHEBI:29103"/>
    </cofactor>
    <text evidence="1">Binds 1 potassium ion per subunit.</text>
</comment>
<comment type="subunit">
    <text evidence="1">Homodimer. Heterotetramer of two MnmE and two MnmG subunits.</text>
</comment>
<comment type="subcellular location">
    <subcellularLocation>
        <location evidence="1">Cytoplasm</location>
    </subcellularLocation>
</comment>
<comment type="similarity">
    <text evidence="1">Belongs to the TRAFAC class TrmE-Era-EngA-EngB-Septin-like GTPase superfamily. TrmE GTPase family.</text>
</comment>
<dbReference type="EC" id="3.6.-.-" evidence="1"/>
<dbReference type="EMBL" id="BA000034">
    <property type="protein sequence ID" value="BAC64048.1"/>
    <property type="molecule type" value="Genomic_DNA"/>
</dbReference>
<dbReference type="RefSeq" id="WP_011054462.1">
    <property type="nucleotide sequence ID" value="NC_004606.1"/>
</dbReference>
<dbReference type="SMR" id="P0DG23"/>
<dbReference type="KEGG" id="sps:SPs0953"/>
<dbReference type="HOGENOM" id="CLU_019624_4_1_9"/>
<dbReference type="GO" id="GO:0005829">
    <property type="term" value="C:cytosol"/>
    <property type="evidence" value="ECO:0007669"/>
    <property type="project" value="TreeGrafter"/>
</dbReference>
<dbReference type="GO" id="GO:0005525">
    <property type="term" value="F:GTP binding"/>
    <property type="evidence" value="ECO:0007669"/>
    <property type="project" value="UniProtKB-UniRule"/>
</dbReference>
<dbReference type="GO" id="GO:0003924">
    <property type="term" value="F:GTPase activity"/>
    <property type="evidence" value="ECO:0007669"/>
    <property type="project" value="UniProtKB-UniRule"/>
</dbReference>
<dbReference type="GO" id="GO:0046872">
    <property type="term" value="F:metal ion binding"/>
    <property type="evidence" value="ECO:0007669"/>
    <property type="project" value="UniProtKB-KW"/>
</dbReference>
<dbReference type="GO" id="GO:0030488">
    <property type="term" value="P:tRNA methylation"/>
    <property type="evidence" value="ECO:0007669"/>
    <property type="project" value="TreeGrafter"/>
</dbReference>
<dbReference type="GO" id="GO:0002098">
    <property type="term" value="P:tRNA wobble uridine modification"/>
    <property type="evidence" value="ECO:0007669"/>
    <property type="project" value="TreeGrafter"/>
</dbReference>
<dbReference type="CDD" id="cd04164">
    <property type="entry name" value="trmE"/>
    <property type="match status" value="1"/>
</dbReference>
<dbReference type="CDD" id="cd14858">
    <property type="entry name" value="TrmE_N"/>
    <property type="match status" value="1"/>
</dbReference>
<dbReference type="FunFam" id="3.30.1360.120:FF:000003">
    <property type="entry name" value="tRNA modification GTPase MnmE"/>
    <property type="match status" value="1"/>
</dbReference>
<dbReference type="FunFam" id="3.40.50.300:FF:000494">
    <property type="entry name" value="tRNA modification GTPase MnmE"/>
    <property type="match status" value="1"/>
</dbReference>
<dbReference type="Gene3D" id="3.40.50.300">
    <property type="entry name" value="P-loop containing nucleotide triphosphate hydrolases"/>
    <property type="match status" value="1"/>
</dbReference>
<dbReference type="Gene3D" id="3.30.1360.120">
    <property type="entry name" value="Probable tRNA modification gtpase trme, domain 1"/>
    <property type="match status" value="1"/>
</dbReference>
<dbReference type="Gene3D" id="1.20.120.430">
    <property type="entry name" value="tRNA modification GTPase MnmE domain 2"/>
    <property type="match status" value="1"/>
</dbReference>
<dbReference type="HAMAP" id="MF_00379">
    <property type="entry name" value="GTPase_MnmE"/>
    <property type="match status" value="1"/>
</dbReference>
<dbReference type="InterPro" id="IPR031168">
    <property type="entry name" value="G_TrmE"/>
</dbReference>
<dbReference type="InterPro" id="IPR006073">
    <property type="entry name" value="GTP-bd"/>
</dbReference>
<dbReference type="InterPro" id="IPR018948">
    <property type="entry name" value="GTP-bd_TrmE_N"/>
</dbReference>
<dbReference type="InterPro" id="IPR004520">
    <property type="entry name" value="GTPase_MnmE"/>
</dbReference>
<dbReference type="InterPro" id="IPR027368">
    <property type="entry name" value="MnmE_dom2"/>
</dbReference>
<dbReference type="InterPro" id="IPR025867">
    <property type="entry name" value="MnmE_helical"/>
</dbReference>
<dbReference type="InterPro" id="IPR027417">
    <property type="entry name" value="P-loop_NTPase"/>
</dbReference>
<dbReference type="InterPro" id="IPR005225">
    <property type="entry name" value="Small_GTP-bd"/>
</dbReference>
<dbReference type="InterPro" id="IPR027266">
    <property type="entry name" value="TrmE/GcvT_dom1"/>
</dbReference>
<dbReference type="NCBIfam" id="TIGR00450">
    <property type="entry name" value="mnmE_trmE_thdF"/>
    <property type="match status" value="1"/>
</dbReference>
<dbReference type="NCBIfam" id="NF003661">
    <property type="entry name" value="PRK05291.1-3"/>
    <property type="match status" value="1"/>
</dbReference>
<dbReference type="NCBIfam" id="TIGR00231">
    <property type="entry name" value="small_GTP"/>
    <property type="match status" value="1"/>
</dbReference>
<dbReference type="PANTHER" id="PTHR42714">
    <property type="entry name" value="TRNA MODIFICATION GTPASE GTPBP3"/>
    <property type="match status" value="1"/>
</dbReference>
<dbReference type="PANTHER" id="PTHR42714:SF2">
    <property type="entry name" value="TRNA MODIFICATION GTPASE GTPBP3, MITOCHONDRIAL"/>
    <property type="match status" value="1"/>
</dbReference>
<dbReference type="Pfam" id="PF01926">
    <property type="entry name" value="MMR_HSR1"/>
    <property type="match status" value="1"/>
</dbReference>
<dbReference type="Pfam" id="PF12631">
    <property type="entry name" value="MnmE_helical"/>
    <property type="match status" value="1"/>
</dbReference>
<dbReference type="Pfam" id="PF10396">
    <property type="entry name" value="TrmE_N"/>
    <property type="match status" value="1"/>
</dbReference>
<dbReference type="SUPFAM" id="SSF52540">
    <property type="entry name" value="P-loop containing nucleoside triphosphate hydrolases"/>
    <property type="match status" value="1"/>
</dbReference>
<dbReference type="SUPFAM" id="SSF116878">
    <property type="entry name" value="TrmE connector domain"/>
    <property type="match status" value="1"/>
</dbReference>
<dbReference type="PROSITE" id="PS51709">
    <property type="entry name" value="G_TRME"/>
    <property type="match status" value="1"/>
</dbReference>
<gene>
    <name evidence="1" type="primary">mnmE</name>
    <name evidence="1" type="synonym">thdF</name>
    <name evidence="1" type="synonym">trmE</name>
    <name type="ordered locus">SPs0953</name>
</gene>